<name>EFTS_CHLL3</name>
<comment type="function">
    <text evidence="1">Associates with the EF-Tu.GDP complex and induces the exchange of GDP to GTP. It remains bound to the aminoacyl-tRNA.EF-Tu.GTP complex up to the GTP hydrolysis stage on the ribosome.</text>
</comment>
<comment type="subcellular location">
    <subcellularLocation>
        <location evidence="1">Cytoplasm</location>
    </subcellularLocation>
</comment>
<comment type="similarity">
    <text evidence="1">Belongs to the EF-Ts family.</text>
</comment>
<keyword id="KW-0963">Cytoplasm</keyword>
<keyword id="KW-0251">Elongation factor</keyword>
<keyword id="KW-0648">Protein biosynthesis</keyword>
<keyword id="KW-1185">Reference proteome</keyword>
<dbReference type="EMBL" id="CP000096">
    <property type="protein sequence ID" value="ABB23292.1"/>
    <property type="molecule type" value="Genomic_DNA"/>
</dbReference>
<dbReference type="RefSeq" id="WP_011357167.1">
    <property type="nucleotide sequence ID" value="NC_007512.1"/>
</dbReference>
<dbReference type="SMR" id="Q3B5T9"/>
<dbReference type="STRING" id="319225.Plut_0404"/>
<dbReference type="KEGG" id="plt:Plut_0404"/>
<dbReference type="eggNOG" id="COG0264">
    <property type="taxonomic scope" value="Bacteria"/>
</dbReference>
<dbReference type="HOGENOM" id="CLU_047155_0_0_10"/>
<dbReference type="OrthoDB" id="9808348at2"/>
<dbReference type="Proteomes" id="UP000002709">
    <property type="component" value="Chromosome"/>
</dbReference>
<dbReference type="GO" id="GO:0005737">
    <property type="term" value="C:cytoplasm"/>
    <property type="evidence" value="ECO:0007669"/>
    <property type="project" value="UniProtKB-SubCell"/>
</dbReference>
<dbReference type="GO" id="GO:0003746">
    <property type="term" value="F:translation elongation factor activity"/>
    <property type="evidence" value="ECO:0007669"/>
    <property type="project" value="UniProtKB-UniRule"/>
</dbReference>
<dbReference type="CDD" id="cd14275">
    <property type="entry name" value="UBA_EF-Ts"/>
    <property type="match status" value="1"/>
</dbReference>
<dbReference type="FunFam" id="1.10.286.20:FF:000001">
    <property type="entry name" value="Elongation factor Ts"/>
    <property type="match status" value="1"/>
</dbReference>
<dbReference type="FunFam" id="1.10.8.10:FF:000001">
    <property type="entry name" value="Elongation factor Ts"/>
    <property type="match status" value="1"/>
</dbReference>
<dbReference type="Gene3D" id="1.10.286.20">
    <property type="match status" value="1"/>
</dbReference>
<dbReference type="Gene3D" id="1.10.8.10">
    <property type="entry name" value="DNA helicase RuvA subunit, C-terminal domain"/>
    <property type="match status" value="1"/>
</dbReference>
<dbReference type="Gene3D" id="3.30.479.20">
    <property type="entry name" value="Elongation factor Ts, dimerisation domain"/>
    <property type="match status" value="2"/>
</dbReference>
<dbReference type="HAMAP" id="MF_00050">
    <property type="entry name" value="EF_Ts"/>
    <property type="match status" value="1"/>
</dbReference>
<dbReference type="InterPro" id="IPR036402">
    <property type="entry name" value="EF-Ts_dimer_sf"/>
</dbReference>
<dbReference type="InterPro" id="IPR001816">
    <property type="entry name" value="Transl_elong_EFTs/EF1B"/>
</dbReference>
<dbReference type="InterPro" id="IPR014039">
    <property type="entry name" value="Transl_elong_EFTs/EF1B_dimer"/>
</dbReference>
<dbReference type="InterPro" id="IPR018101">
    <property type="entry name" value="Transl_elong_Ts_CS"/>
</dbReference>
<dbReference type="InterPro" id="IPR009060">
    <property type="entry name" value="UBA-like_sf"/>
</dbReference>
<dbReference type="NCBIfam" id="TIGR00116">
    <property type="entry name" value="tsf"/>
    <property type="match status" value="1"/>
</dbReference>
<dbReference type="PANTHER" id="PTHR11741">
    <property type="entry name" value="ELONGATION FACTOR TS"/>
    <property type="match status" value="1"/>
</dbReference>
<dbReference type="PANTHER" id="PTHR11741:SF0">
    <property type="entry name" value="ELONGATION FACTOR TS, MITOCHONDRIAL"/>
    <property type="match status" value="1"/>
</dbReference>
<dbReference type="Pfam" id="PF00889">
    <property type="entry name" value="EF_TS"/>
    <property type="match status" value="1"/>
</dbReference>
<dbReference type="SUPFAM" id="SSF54713">
    <property type="entry name" value="Elongation factor Ts (EF-Ts), dimerisation domain"/>
    <property type="match status" value="2"/>
</dbReference>
<dbReference type="SUPFAM" id="SSF46934">
    <property type="entry name" value="UBA-like"/>
    <property type="match status" value="1"/>
</dbReference>
<dbReference type="PROSITE" id="PS01126">
    <property type="entry name" value="EF_TS_1"/>
    <property type="match status" value="1"/>
</dbReference>
<dbReference type="PROSITE" id="PS01127">
    <property type="entry name" value="EF_TS_2"/>
    <property type="match status" value="1"/>
</dbReference>
<sequence>MSQISAKDVKDLRDTTGIGMMDCKKALEETGGDMEKAIEYLRKKGAALAAKRAEKDASEGMICIRVSADRKSGVILELNCETDFVARGEVFTGFAGALGDLALENRTVSTDALLKLRMADAMGGELVDDAIKTMTGKLGEKIDLKRLFFFDAADGLVESYVHPGAQLGAIIHLATDKPEAVAPLAKDLAMQVAAAAPIEVDRSAVPQELIAKESEIYRQQALGQGKKEEFVDKIVLGRLDKYYQEVVLLEQSFIKSNNMKVSAVLDEFRKLLQAAVDVKEFVRYQLGE</sequence>
<evidence type="ECO:0000255" key="1">
    <source>
        <dbReference type="HAMAP-Rule" id="MF_00050"/>
    </source>
</evidence>
<accession>Q3B5T9</accession>
<reference key="1">
    <citation type="submission" date="2005-08" db="EMBL/GenBank/DDBJ databases">
        <title>Complete sequence of Pelodictyon luteolum DSM 273.</title>
        <authorList>
            <consortium name="US DOE Joint Genome Institute"/>
            <person name="Copeland A."/>
            <person name="Lucas S."/>
            <person name="Lapidus A."/>
            <person name="Barry K."/>
            <person name="Detter J.C."/>
            <person name="Glavina T."/>
            <person name="Hammon N."/>
            <person name="Israni S."/>
            <person name="Pitluck S."/>
            <person name="Bryant D."/>
            <person name="Schmutz J."/>
            <person name="Larimer F."/>
            <person name="Land M."/>
            <person name="Kyrpides N."/>
            <person name="Ivanova N."/>
            <person name="Richardson P."/>
        </authorList>
    </citation>
    <scope>NUCLEOTIDE SEQUENCE [LARGE SCALE GENOMIC DNA]</scope>
    <source>
        <strain>DSM 273 / BCRC 81028 / 2530</strain>
    </source>
</reference>
<feature type="chain" id="PRO_0000241505" description="Elongation factor Ts">
    <location>
        <begin position="1"/>
        <end position="288"/>
    </location>
</feature>
<feature type="region of interest" description="Involved in Mg(2+) ion dislocation from EF-Tu" evidence="1">
    <location>
        <begin position="82"/>
        <end position="85"/>
    </location>
</feature>
<proteinExistence type="inferred from homology"/>
<gene>
    <name evidence="1" type="primary">tsf</name>
    <name type="ordered locus">Plut_0404</name>
</gene>
<protein>
    <recommendedName>
        <fullName evidence="1">Elongation factor Ts</fullName>
        <shortName evidence="1">EF-Ts</shortName>
    </recommendedName>
</protein>
<organism>
    <name type="scientific">Chlorobium luteolum (strain DSM 273 / BCRC 81028 / 2530)</name>
    <name type="common">Pelodictyon luteolum</name>
    <dbReference type="NCBI Taxonomy" id="319225"/>
    <lineage>
        <taxon>Bacteria</taxon>
        <taxon>Pseudomonadati</taxon>
        <taxon>Chlorobiota</taxon>
        <taxon>Chlorobiia</taxon>
        <taxon>Chlorobiales</taxon>
        <taxon>Chlorobiaceae</taxon>
        <taxon>Chlorobium/Pelodictyon group</taxon>
        <taxon>Pelodictyon</taxon>
    </lineage>
</organism>